<protein>
    <recommendedName>
        <fullName>Protein transport protein SEC23</fullName>
    </recommendedName>
</protein>
<accession>Q2HB00</accession>
<reference key="1">
    <citation type="journal article" date="2015" name="Genome Announc.">
        <title>Draft genome sequence of the cellulolytic fungus Chaetomium globosum.</title>
        <authorList>
            <person name="Cuomo C.A."/>
            <person name="Untereiner W.A."/>
            <person name="Ma L.-J."/>
            <person name="Grabherr M."/>
            <person name="Birren B.W."/>
        </authorList>
    </citation>
    <scope>NUCLEOTIDE SEQUENCE [LARGE SCALE GENOMIC DNA]</scope>
    <source>
        <strain>ATCC 6205 / CBS 148.51 / DSM 1962 / NBRC 6347 / NRRL 1970</strain>
    </source>
</reference>
<gene>
    <name type="primary">SEC23</name>
    <name type="ORF">CHGG_02604</name>
</gene>
<evidence type="ECO:0000250" key="1"/>
<evidence type="ECO:0000305" key="2"/>
<name>SEC23_CHAGB</name>
<proteinExistence type="inferred from homology"/>
<dbReference type="EMBL" id="CH408030">
    <property type="protein sequence ID" value="EAQ90669.1"/>
    <property type="molecule type" value="Genomic_DNA"/>
</dbReference>
<dbReference type="RefSeq" id="XP_001229120.1">
    <property type="nucleotide sequence ID" value="XM_001229119.1"/>
</dbReference>
<dbReference type="SMR" id="Q2HB00"/>
<dbReference type="FunCoup" id="Q2HB00">
    <property type="interactions" value="936"/>
</dbReference>
<dbReference type="STRING" id="306901.Q2HB00"/>
<dbReference type="GeneID" id="4389933"/>
<dbReference type="VEuPathDB" id="FungiDB:CHGG_02604"/>
<dbReference type="eggNOG" id="KOG1986">
    <property type="taxonomic scope" value="Eukaryota"/>
</dbReference>
<dbReference type="HOGENOM" id="CLU_008658_3_0_1"/>
<dbReference type="InParanoid" id="Q2HB00"/>
<dbReference type="OMA" id="FPPHYAE"/>
<dbReference type="OrthoDB" id="10256289at2759"/>
<dbReference type="Proteomes" id="UP000001056">
    <property type="component" value="Unassembled WGS sequence"/>
</dbReference>
<dbReference type="GO" id="GO:0030127">
    <property type="term" value="C:COPII vesicle coat"/>
    <property type="evidence" value="ECO:0007669"/>
    <property type="project" value="InterPro"/>
</dbReference>
<dbReference type="GO" id="GO:0070971">
    <property type="term" value="C:endoplasmic reticulum exit site"/>
    <property type="evidence" value="ECO:0007669"/>
    <property type="project" value="TreeGrafter"/>
</dbReference>
<dbReference type="GO" id="GO:0005789">
    <property type="term" value="C:endoplasmic reticulum membrane"/>
    <property type="evidence" value="ECO:0007669"/>
    <property type="project" value="UniProtKB-SubCell"/>
</dbReference>
<dbReference type="GO" id="GO:0000139">
    <property type="term" value="C:Golgi membrane"/>
    <property type="evidence" value="ECO:0007669"/>
    <property type="project" value="UniProtKB-SubCell"/>
</dbReference>
<dbReference type="GO" id="GO:0005096">
    <property type="term" value="F:GTPase activator activity"/>
    <property type="evidence" value="ECO:0007669"/>
    <property type="project" value="TreeGrafter"/>
</dbReference>
<dbReference type="GO" id="GO:0008270">
    <property type="term" value="F:zinc ion binding"/>
    <property type="evidence" value="ECO:0007669"/>
    <property type="project" value="InterPro"/>
</dbReference>
<dbReference type="GO" id="GO:0090110">
    <property type="term" value="P:COPII-coated vesicle cargo loading"/>
    <property type="evidence" value="ECO:0007669"/>
    <property type="project" value="TreeGrafter"/>
</dbReference>
<dbReference type="GO" id="GO:0006886">
    <property type="term" value="P:intracellular protein transport"/>
    <property type="evidence" value="ECO:0007669"/>
    <property type="project" value="InterPro"/>
</dbReference>
<dbReference type="CDD" id="cd01478">
    <property type="entry name" value="Sec23-like"/>
    <property type="match status" value="1"/>
</dbReference>
<dbReference type="CDD" id="cd11287">
    <property type="entry name" value="Sec23_C"/>
    <property type="match status" value="1"/>
</dbReference>
<dbReference type="FunFam" id="1.20.120.730:FF:000001">
    <property type="entry name" value="Protein transport protein SEC23"/>
    <property type="match status" value="1"/>
</dbReference>
<dbReference type="FunFam" id="2.30.30.380:FF:000001">
    <property type="entry name" value="Protein transport protein SEC23"/>
    <property type="match status" value="1"/>
</dbReference>
<dbReference type="FunFam" id="3.40.20.10:FF:000006">
    <property type="entry name" value="Protein transport protein SEC23"/>
    <property type="match status" value="1"/>
</dbReference>
<dbReference type="FunFam" id="3.40.50.410:FF:000008">
    <property type="entry name" value="Protein transport protein SEC23"/>
    <property type="match status" value="1"/>
</dbReference>
<dbReference type="Gene3D" id="2.60.40.1670">
    <property type="entry name" value="beta-sandwich domain of Sec23/24"/>
    <property type="match status" value="1"/>
</dbReference>
<dbReference type="Gene3D" id="1.20.120.730">
    <property type="entry name" value="Sec23/Sec24 helical domain"/>
    <property type="match status" value="1"/>
</dbReference>
<dbReference type="Gene3D" id="3.40.20.10">
    <property type="entry name" value="Severin"/>
    <property type="match status" value="1"/>
</dbReference>
<dbReference type="Gene3D" id="3.40.50.410">
    <property type="entry name" value="von Willebrand factor, type A domain"/>
    <property type="match status" value="1"/>
</dbReference>
<dbReference type="Gene3D" id="2.30.30.380">
    <property type="entry name" value="Zn-finger domain of Sec23/24"/>
    <property type="match status" value="1"/>
</dbReference>
<dbReference type="InterPro" id="IPR029006">
    <property type="entry name" value="ADF-H/Gelsolin-like_dom_sf"/>
</dbReference>
<dbReference type="InterPro" id="IPR007123">
    <property type="entry name" value="Gelsolin-like_dom"/>
</dbReference>
<dbReference type="InterPro" id="IPR036180">
    <property type="entry name" value="Gelsolin-like_dom_sf"/>
</dbReference>
<dbReference type="InterPro" id="IPR037364">
    <property type="entry name" value="Sec23"/>
</dbReference>
<dbReference type="InterPro" id="IPR006900">
    <property type="entry name" value="Sec23/24_helical_dom"/>
</dbReference>
<dbReference type="InterPro" id="IPR036175">
    <property type="entry name" value="Sec23/24_helical_dom_sf"/>
</dbReference>
<dbReference type="InterPro" id="IPR006896">
    <property type="entry name" value="Sec23/24_trunk_dom"/>
</dbReference>
<dbReference type="InterPro" id="IPR012990">
    <property type="entry name" value="Sec23_24_beta_S"/>
</dbReference>
<dbReference type="InterPro" id="IPR037550">
    <property type="entry name" value="Sec23_C"/>
</dbReference>
<dbReference type="InterPro" id="IPR036465">
    <property type="entry name" value="vWFA_dom_sf"/>
</dbReference>
<dbReference type="InterPro" id="IPR006895">
    <property type="entry name" value="Znf_Sec23_Sec24"/>
</dbReference>
<dbReference type="InterPro" id="IPR036174">
    <property type="entry name" value="Znf_Sec23_Sec24_sf"/>
</dbReference>
<dbReference type="PANTHER" id="PTHR11141">
    <property type="entry name" value="PROTEIN TRANSPORT PROTEIN SEC23"/>
    <property type="match status" value="1"/>
</dbReference>
<dbReference type="PANTHER" id="PTHR11141:SF0">
    <property type="entry name" value="PROTEIN TRANSPORT PROTEIN SEC23"/>
    <property type="match status" value="1"/>
</dbReference>
<dbReference type="Pfam" id="PF00626">
    <property type="entry name" value="Gelsolin"/>
    <property type="match status" value="1"/>
</dbReference>
<dbReference type="Pfam" id="PF08033">
    <property type="entry name" value="Sec23_BS"/>
    <property type="match status" value="1"/>
</dbReference>
<dbReference type="Pfam" id="PF04815">
    <property type="entry name" value="Sec23_helical"/>
    <property type="match status" value="1"/>
</dbReference>
<dbReference type="Pfam" id="PF04811">
    <property type="entry name" value="Sec23_trunk"/>
    <property type="match status" value="1"/>
</dbReference>
<dbReference type="Pfam" id="PF04810">
    <property type="entry name" value="zf-Sec23_Sec24"/>
    <property type="match status" value="1"/>
</dbReference>
<dbReference type="SUPFAM" id="SSF81995">
    <property type="entry name" value="beta-sandwich domain of Sec23/24"/>
    <property type="match status" value="1"/>
</dbReference>
<dbReference type="SUPFAM" id="SSF82754">
    <property type="entry name" value="C-terminal, gelsolin-like domain of Sec23/24"/>
    <property type="match status" value="1"/>
</dbReference>
<dbReference type="SUPFAM" id="SSF81811">
    <property type="entry name" value="Helical domain of Sec23/24"/>
    <property type="match status" value="1"/>
</dbReference>
<dbReference type="SUPFAM" id="SSF53300">
    <property type="entry name" value="vWA-like"/>
    <property type="match status" value="1"/>
</dbReference>
<dbReference type="SUPFAM" id="SSF82919">
    <property type="entry name" value="Zn-finger domain of Sec23/24"/>
    <property type="match status" value="1"/>
</dbReference>
<organism>
    <name type="scientific">Chaetomium globosum (strain ATCC 6205 / CBS 148.51 / DSM 1962 / NBRC 6347 / NRRL 1970)</name>
    <name type="common">Soil fungus</name>
    <dbReference type="NCBI Taxonomy" id="306901"/>
    <lineage>
        <taxon>Eukaryota</taxon>
        <taxon>Fungi</taxon>
        <taxon>Dikarya</taxon>
        <taxon>Ascomycota</taxon>
        <taxon>Pezizomycotina</taxon>
        <taxon>Sordariomycetes</taxon>
        <taxon>Sordariomycetidae</taxon>
        <taxon>Sordariales</taxon>
        <taxon>Chaetomiaceae</taxon>
        <taxon>Chaetomium</taxon>
    </lineage>
</organism>
<keyword id="KW-0963">Cytoplasm</keyword>
<keyword id="KW-0968">Cytoplasmic vesicle</keyword>
<keyword id="KW-0256">Endoplasmic reticulum</keyword>
<keyword id="KW-0931">ER-Golgi transport</keyword>
<keyword id="KW-0333">Golgi apparatus</keyword>
<keyword id="KW-0472">Membrane</keyword>
<keyword id="KW-0479">Metal-binding</keyword>
<keyword id="KW-0653">Protein transport</keyword>
<keyword id="KW-1185">Reference proteome</keyword>
<keyword id="KW-0813">Transport</keyword>
<keyword id="KW-0862">Zinc</keyword>
<sequence length="773" mass="86249">MDYDSMKEQWGEVEDRDGVRLSWNVFPSTRMEASRLVVPIGALYTPLKEKPDTPLLQFEPVTCKQPCRSVLNPFCQVDVRARLWICPFCLSRNPLPPHYKDITAQAIPPELHPSNTTIEYRLSRPAPSPPIFLYVVDTCQEEDSLAALKESLIMSLSLLPENALVGLITYGTMAQVHEIGYTECAKSYVFRGSKEYAAKQVQEMLGLIQPAMRPGMPAHQPGRPMPMGPASRFLLPVTQAEFQLTKALEQLQQDPWPISSDRRNLRCTGVALSVAVGLLETSFQNAGGRIMLFAGGPATEGPGMVVGPELREPIRSHHDIDRDNVKYYKKALKFYDNLAKRTAHNGHTIDIFAGCLDQVGLLEMKGLCNSTGGHMILTDSFTSSMFKQSFIRVFEKDGDDNLLMGFNAVLEVLTTKELKVTGLIGHAVSLNKKSTSVGETECGIGNTCSWKMCGIDPKASYGVYFEIAQGGPSQHQQNQKGMIQFLTYYQHSSGQFHLRVTTIARDLSGPAGDPAIAHSFDQEAAAVLMSRIAVFKAEVDDGPDVLRWVDRMLIRLCSRFADYRKDDPSSFRLEKNFTLYPQFMFHLRRSQFLQVFNNSPDETAFYRHVLDHEDVSNSLVMIQPTLDSYTFDQEGGQPVLLDSSSIQPTHILLLDTFFHILIFHGETVAEWRKAGYQDQEGYENFASLLEQPKEDARDLITDRFPLPRFIVCDHGGSQARFLLSKLNPSTTHTSGAGAYGGVGAQSAQTIFTDDVSLQTFMEHLMKLAVSGTN</sequence>
<feature type="chain" id="PRO_0000295458" description="Protein transport protein SEC23">
    <location>
        <begin position="1"/>
        <end position="773"/>
    </location>
</feature>
<feature type="binding site" evidence="1">
    <location>
        <position position="63"/>
    </location>
    <ligand>
        <name>Zn(2+)</name>
        <dbReference type="ChEBI" id="CHEBI:29105"/>
    </ligand>
</feature>
<feature type="binding site" evidence="1">
    <location>
        <position position="67"/>
    </location>
    <ligand>
        <name>Zn(2+)</name>
        <dbReference type="ChEBI" id="CHEBI:29105"/>
    </ligand>
</feature>
<feature type="binding site" evidence="1">
    <location>
        <position position="86"/>
    </location>
    <ligand>
        <name>Zn(2+)</name>
        <dbReference type="ChEBI" id="CHEBI:29105"/>
    </ligand>
</feature>
<feature type="binding site" evidence="1">
    <location>
        <position position="89"/>
    </location>
    <ligand>
        <name>Zn(2+)</name>
        <dbReference type="ChEBI" id="CHEBI:29105"/>
    </ligand>
</feature>
<comment type="function">
    <text evidence="1">Component of the coat protein complex II (COPII) which promotes the formation of transport vesicles from the endoplasmic reticulum (ER). The coat has two main functions, the physical deformation of the endoplasmic reticulum membrane into vesicles and the selection of cargo molecules (By similarity).</text>
</comment>
<comment type="subunit">
    <text evidence="1">The COPII coat is composed of at least 5 proteins: the SEC23/24 complex, the SEC13/31 complex, and the protein SAR1.</text>
</comment>
<comment type="subcellular location">
    <subcellularLocation>
        <location evidence="1">Cytoplasm</location>
    </subcellularLocation>
    <subcellularLocation>
        <location evidence="1">Cytoplasmic vesicle</location>
        <location evidence="1">COPII-coated vesicle membrane</location>
        <topology evidence="1">Peripheral membrane protein</topology>
        <orientation evidence="1">Cytoplasmic side</orientation>
    </subcellularLocation>
    <subcellularLocation>
        <location evidence="1">Endoplasmic reticulum membrane</location>
        <topology evidence="1">Peripheral membrane protein</topology>
        <orientation evidence="1">Cytoplasmic side</orientation>
    </subcellularLocation>
    <subcellularLocation>
        <location evidence="1">Golgi apparatus membrane</location>
        <topology evidence="1">Peripheral membrane protein</topology>
        <orientation evidence="1">Cytoplasmic side</orientation>
    </subcellularLocation>
</comment>
<comment type="similarity">
    <text evidence="2">Belongs to the SEC23/SEC24 family. SEC23 subfamily.</text>
</comment>